<accession>P54279</accession>
<accession>B9EJ22</accession>
<name>PMS2_MOUSE</name>
<organism>
    <name type="scientific">Mus musculus</name>
    <name type="common">Mouse</name>
    <dbReference type="NCBI Taxonomy" id="10090"/>
    <lineage>
        <taxon>Eukaryota</taxon>
        <taxon>Metazoa</taxon>
        <taxon>Chordata</taxon>
        <taxon>Craniata</taxon>
        <taxon>Vertebrata</taxon>
        <taxon>Euteleostomi</taxon>
        <taxon>Mammalia</taxon>
        <taxon>Eutheria</taxon>
        <taxon>Euarchontoglires</taxon>
        <taxon>Glires</taxon>
        <taxon>Rodentia</taxon>
        <taxon>Myomorpha</taxon>
        <taxon>Muroidea</taxon>
        <taxon>Muridae</taxon>
        <taxon>Murinae</taxon>
        <taxon>Mus</taxon>
        <taxon>Mus</taxon>
    </lineage>
</organism>
<dbReference type="EC" id="3.1.-.-"/>
<dbReference type="EMBL" id="U28724">
    <property type="protein sequence ID" value="AAA87031.1"/>
    <property type="status" value="ALT_FRAME"/>
    <property type="molecule type" value="mRNA"/>
</dbReference>
<dbReference type="EMBL" id="BC141287">
    <property type="protein sequence ID" value="AAI41288.1"/>
    <property type="molecule type" value="mRNA"/>
</dbReference>
<dbReference type="CCDS" id="CCDS39375.1"/>
<dbReference type="RefSeq" id="NP_032912.2">
    <property type="nucleotide sequence ID" value="NM_008886.3"/>
</dbReference>
<dbReference type="SMR" id="P54279"/>
<dbReference type="CORUM" id="P54279"/>
<dbReference type="FunCoup" id="P54279">
    <property type="interactions" value="3806"/>
</dbReference>
<dbReference type="STRING" id="10090.ENSMUSP00000119875"/>
<dbReference type="MoonProt" id="P54279"/>
<dbReference type="GlyGen" id="P54279">
    <property type="glycosylation" value="1 site, 1 O-linked glycan (1 site)"/>
</dbReference>
<dbReference type="iPTMnet" id="P54279"/>
<dbReference type="PhosphoSitePlus" id="P54279"/>
<dbReference type="SwissPalm" id="P54279"/>
<dbReference type="jPOST" id="P54279"/>
<dbReference type="PaxDb" id="10090-ENSMUSP00000119875"/>
<dbReference type="PeptideAtlas" id="P54279"/>
<dbReference type="ProteomicsDB" id="289702"/>
<dbReference type="ProteomicsDB" id="335302"/>
<dbReference type="Pumba" id="P54279"/>
<dbReference type="Antibodypedia" id="4134">
    <property type="antibodies" value="608 antibodies from 43 providers"/>
</dbReference>
<dbReference type="Ensembl" id="ENSMUST00000148011.8">
    <property type="protein sequence ID" value="ENSMUSP00000119875.2"/>
    <property type="gene ID" value="ENSMUSG00000079109.12"/>
</dbReference>
<dbReference type="GeneID" id="18861"/>
<dbReference type="KEGG" id="mmu:18861"/>
<dbReference type="AGR" id="MGI:104288"/>
<dbReference type="CTD" id="5395"/>
<dbReference type="MGI" id="MGI:104288">
    <property type="gene designation" value="Pms2"/>
</dbReference>
<dbReference type="VEuPathDB" id="HostDB:ENSMUSG00000079109"/>
<dbReference type="eggNOG" id="KOG1978">
    <property type="taxonomic scope" value="Eukaryota"/>
</dbReference>
<dbReference type="GeneTree" id="ENSGT00940000155381"/>
<dbReference type="HOGENOM" id="CLU_004131_0_2_1"/>
<dbReference type="InParanoid" id="P54279"/>
<dbReference type="OMA" id="MRPRRMP"/>
<dbReference type="OrthoDB" id="10254304at2759"/>
<dbReference type="TreeFam" id="TF300711"/>
<dbReference type="Reactome" id="R-MMU-5358565">
    <property type="pathway name" value="Mismatch repair (MMR) directed by MSH2:MSH6 (MutSalpha)"/>
</dbReference>
<dbReference type="BioGRID-ORCS" id="18861">
    <property type="hits" value="1 hit in 117 CRISPR screens"/>
</dbReference>
<dbReference type="ChiTaRS" id="Pms2">
    <property type="organism name" value="mouse"/>
</dbReference>
<dbReference type="PRO" id="PR:P54279"/>
<dbReference type="Proteomes" id="UP000000589">
    <property type="component" value="Chromosome 5"/>
</dbReference>
<dbReference type="RNAct" id="P54279">
    <property type="molecule type" value="protein"/>
</dbReference>
<dbReference type="Bgee" id="ENSMUSG00000079109">
    <property type="expression patterns" value="Expressed in urethra and 252 other cell types or tissues"/>
</dbReference>
<dbReference type="GO" id="GO:0005829">
    <property type="term" value="C:cytosol"/>
    <property type="evidence" value="ECO:0007669"/>
    <property type="project" value="Ensembl"/>
</dbReference>
<dbReference type="GO" id="GO:0032389">
    <property type="term" value="C:MutLalpha complex"/>
    <property type="evidence" value="ECO:0000314"/>
    <property type="project" value="MGI"/>
</dbReference>
<dbReference type="GO" id="GO:0005654">
    <property type="term" value="C:nucleoplasm"/>
    <property type="evidence" value="ECO:0007669"/>
    <property type="project" value="Ensembl"/>
</dbReference>
<dbReference type="GO" id="GO:0005524">
    <property type="term" value="F:ATP binding"/>
    <property type="evidence" value="ECO:0007669"/>
    <property type="project" value="UniProtKB-KW"/>
</dbReference>
<dbReference type="GO" id="GO:0016887">
    <property type="term" value="F:ATP hydrolysis activity"/>
    <property type="evidence" value="ECO:0007669"/>
    <property type="project" value="InterPro"/>
</dbReference>
<dbReference type="GO" id="GO:0140664">
    <property type="term" value="F:ATP-dependent DNA damage sensor activity"/>
    <property type="evidence" value="ECO:0007669"/>
    <property type="project" value="InterPro"/>
</dbReference>
<dbReference type="GO" id="GO:0004519">
    <property type="term" value="F:endonuclease activity"/>
    <property type="evidence" value="ECO:0007669"/>
    <property type="project" value="UniProtKB-KW"/>
</dbReference>
<dbReference type="GO" id="GO:0032407">
    <property type="term" value="F:MutSalpha complex binding"/>
    <property type="evidence" value="ECO:0007669"/>
    <property type="project" value="Ensembl"/>
</dbReference>
<dbReference type="GO" id="GO:0032138">
    <property type="term" value="F:single base insertion or deletion binding"/>
    <property type="evidence" value="ECO:0007669"/>
    <property type="project" value="Ensembl"/>
</dbReference>
<dbReference type="GO" id="GO:0003697">
    <property type="term" value="F:single-stranded DNA binding"/>
    <property type="evidence" value="ECO:0007669"/>
    <property type="project" value="Ensembl"/>
</dbReference>
<dbReference type="GO" id="GO:0006974">
    <property type="term" value="P:DNA damage response"/>
    <property type="evidence" value="ECO:0000315"/>
    <property type="project" value="MGI"/>
</dbReference>
<dbReference type="GO" id="GO:0006281">
    <property type="term" value="P:DNA repair"/>
    <property type="evidence" value="ECO:0000315"/>
    <property type="project" value="MGI"/>
</dbReference>
<dbReference type="GO" id="GO:0051321">
    <property type="term" value="P:meiotic cell cycle"/>
    <property type="evidence" value="ECO:0000304"/>
    <property type="project" value="MGI"/>
</dbReference>
<dbReference type="GO" id="GO:0006298">
    <property type="term" value="P:mismatch repair"/>
    <property type="evidence" value="ECO:0000315"/>
    <property type="project" value="MGI"/>
</dbReference>
<dbReference type="GO" id="GO:0048298">
    <property type="term" value="P:positive regulation of isotype switching to IgA isotypes"/>
    <property type="evidence" value="ECO:0000315"/>
    <property type="project" value="CAFA"/>
</dbReference>
<dbReference type="GO" id="GO:0048304">
    <property type="term" value="P:positive regulation of isotype switching to IgG isotypes"/>
    <property type="evidence" value="ECO:0000315"/>
    <property type="project" value="CAFA"/>
</dbReference>
<dbReference type="GO" id="GO:0009410">
    <property type="term" value="P:response to xenobiotic stimulus"/>
    <property type="evidence" value="ECO:0007669"/>
    <property type="project" value="Ensembl"/>
</dbReference>
<dbReference type="GO" id="GO:0016446">
    <property type="term" value="P:somatic hypermutation of immunoglobulin genes"/>
    <property type="evidence" value="ECO:0000315"/>
    <property type="project" value="CAFA"/>
</dbReference>
<dbReference type="GO" id="GO:0016447">
    <property type="term" value="P:somatic recombination of immunoglobulin gene segments"/>
    <property type="evidence" value="ECO:0000315"/>
    <property type="project" value="MGI"/>
</dbReference>
<dbReference type="CDD" id="cd16926">
    <property type="entry name" value="HATPase_MutL-MLH-PMS-like"/>
    <property type="match status" value="1"/>
</dbReference>
<dbReference type="CDD" id="cd03484">
    <property type="entry name" value="MutL_Trans_hPMS_2_like"/>
    <property type="match status" value="1"/>
</dbReference>
<dbReference type="FunFam" id="3.30.1370.100:FF:000001">
    <property type="entry name" value="Mismatch repair endonuclease pms1, putative"/>
    <property type="match status" value="1"/>
</dbReference>
<dbReference type="FunFam" id="3.30.565.10:FF:000014">
    <property type="entry name" value="Mismatch repair endonuclease pms1, putative"/>
    <property type="match status" value="1"/>
</dbReference>
<dbReference type="FunFam" id="3.30.230.10:FF:000032">
    <property type="entry name" value="mismatch repair endonuclease PMS2 isoform X2"/>
    <property type="match status" value="1"/>
</dbReference>
<dbReference type="FunFam" id="3.30.1540.20:FF:000019">
    <property type="entry name" value="PMS1 homolog 2, mismatch repair system component"/>
    <property type="match status" value="1"/>
</dbReference>
<dbReference type="Gene3D" id="3.30.230.10">
    <property type="match status" value="1"/>
</dbReference>
<dbReference type="Gene3D" id="3.30.565.10">
    <property type="entry name" value="Histidine kinase-like ATPase, C-terminal domain"/>
    <property type="match status" value="1"/>
</dbReference>
<dbReference type="Gene3D" id="3.30.1540.20">
    <property type="entry name" value="MutL, C-terminal domain, dimerisation subdomain"/>
    <property type="match status" value="1"/>
</dbReference>
<dbReference type="Gene3D" id="3.30.1370.100">
    <property type="entry name" value="MutL, C-terminal domain, regulatory subdomain"/>
    <property type="match status" value="1"/>
</dbReference>
<dbReference type="InterPro" id="IPR014762">
    <property type="entry name" value="DNA_mismatch_repair_CS"/>
</dbReference>
<dbReference type="InterPro" id="IPR013507">
    <property type="entry name" value="DNA_mismatch_S5_2-like"/>
</dbReference>
<dbReference type="InterPro" id="IPR036890">
    <property type="entry name" value="HATPase_C_sf"/>
</dbReference>
<dbReference type="InterPro" id="IPR002099">
    <property type="entry name" value="MutL/Mlh/PMS"/>
</dbReference>
<dbReference type="InterPro" id="IPR038973">
    <property type="entry name" value="MutL/Mlh/Pms-like"/>
</dbReference>
<dbReference type="InterPro" id="IPR014790">
    <property type="entry name" value="MutL_C"/>
</dbReference>
<dbReference type="InterPro" id="IPR042120">
    <property type="entry name" value="MutL_C_dimsub"/>
</dbReference>
<dbReference type="InterPro" id="IPR042121">
    <property type="entry name" value="MutL_C_regsub"/>
</dbReference>
<dbReference type="InterPro" id="IPR037198">
    <property type="entry name" value="MutL_C_sf"/>
</dbReference>
<dbReference type="InterPro" id="IPR020568">
    <property type="entry name" value="Ribosomal_Su5_D2-typ_SF"/>
</dbReference>
<dbReference type="InterPro" id="IPR014721">
    <property type="entry name" value="Ribsml_uS5_D2-typ_fold_subgr"/>
</dbReference>
<dbReference type="NCBIfam" id="TIGR00585">
    <property type="entry name" value="mutl"/>
    <property type="match status" value="1"/>
</dbReference>
<dbReference type="PANTHER" id="PTHR10073">
    <property type="entry name" value="DNA MISMATCH REPAIR PROTEIN MLH, PMS, MUTL"/>
    <property type="match status" value="1"/>
</dbReference>
<dbReference type="PANTHER" id="PTHR10073:SF52">
    <property type="entry name" value="MISMATCH REPAIR ENDONUCLEASE PMS2"/>
    <property type="match status" value="1"/>
</dbReference>
<dbReference type="Pfam" id="PF01119">
    <property type="entry name" value="DNA_mis_repair"/>
    <property type="match status" value="1"/>
</dbReference>
<dbReference type="Pfam" id="PF13589">
    <property type="entry name" value="HATPase_c_3"/>
    <property type="match status" value="1"/>
</dbReference>
<dbReference type="Pfam" id="PF08676">
    <property type="entry name" value="MutL_C"/>
    <property type="match status" value="1"/>
</dbReference>
<dbReference type="SMART" id="SM01340">
    <property type="entry name" value="DNA_mis_repair"/>
    <property type="match status" value="1"/>
</dbReference>
<dbReference type="SMART" id="SM00853">
    <property type="entry name" value="MutL_C"/>
    <property type="match status" value="1"/>
</dbReference>
<dbReference type="SUPFAM" id="SSF55874">
    <property type="entry name" value="ATPase domain of HSP90 chaperone/DNA topoisomerase II/histidine kinase"/>
    <property type="match status" value="1"/>
</dbReference>
<dbReference type="SUPFAM" id="SSF118116">
    <property type="entry name" value="DNA mismatch repair protein MutL"/>
    <property type="match status" value="1"/>
</dbReference>
<dbReference type="SUPFAM" id="SSF54211">
    <property type="entry name" value="Ribosomal protein S5 domain 2-like"/>
    <property type="match status" value="1"/>
</dbReference>
<dbReference type="PROSITE" id="PS00058">
    <property type="entry name" value="DNA_MISMATCH_REPAIR_1"/>
    <property type="match status" value="1"/>
</dbReference>
<comment type="function">
    <text evidence="1">Component of the post-replicative DNA mismatch repair system (MMR). Heterodimerizes with MLH1 to form MutL alpha. DNA repair is initiated by MutS alpha (MSH2-MSH6) or MutS beta (MSH2-MSH3) binding to a dsDNA mismatch, then MutL alpha is recruited to the heteroduplex. Assembly of the MutL-MutS-heteroduplex ternary complex in presence of RFC and PCNA is sufficient to activate endonuclease activity of PMS2. It introduces single-strand breaks near the mismatch and thus generates new entry points for the exonuclease EXO1 to degrade the strand containing the mismatch. DNA methylation would prevent cleavage and therefore assure that only the newly mutated DNA strand is going to be corrected. MutL alpha (MLH1-PMS2) interacts physically with the clamp loader subunits of DNA polymerase III, suggesting that it may play a role to recruit the DNA polymerase III to the site of the MMR. Also implicated in DNA damage signaling, a process which induces cell cycle arrest and can lead to apoptosis in case of major DNA damages. Possesses an ATPase activity, but in the absence of gross structural changes, ATP hydrolysis may not be necessary for proficient mismatch repair (By similarity).</text>
</comment>
<comment type="catalytic activity">
    <reaction evidence="1">
        <text>ATP + H2O = ADP + phosphate + H(+)</text>
        <dbReference type="Rhea" id="RHEA:13065"/>
        <dbReference type="ChEBI" id="CHEBI:15377"/>
        <dbReference type="ChEBI" id="CHEBI:15378"/>
        <dbReference type="ChEBI" id="CHEBI:30616"/>
        <dbReference type="ChEBI" id="CHEBI:43474"/>
        <dbReference type="ChEBI" id="CHEBI:456216"/>
    </reaction>
    <physiologicalReaction direction="left-to-right" evidence="1">
        <dbReference type="Rhea" id="RHEA:13066"/>
    </physiologicalReaction>
</comment>
<comment type="subunit">
    <text evidence="1">Heterodimer of PMS2 and MLH1 (MutL alpha); this interaction is required for the stability of both partners. Forms a ternary complex with MutS alpha (MSH2-MSH6) or MutS beta (MSH2-MSH3). Part of the BRCA1-associated genome surveillance complex (BASC), which contains BRCA1, MSH2, MSH6, MLH1, ATM, BLM, PMS2 and the RAD50-MRE11-NBS1 protein complex. This association could be a dynamic process changing throughout the cell cycle and within subnuclear domains. Interacts with MTMR15/FAN1.</text>
</comment>
<comment type="subcellular location">
    <subcellularLocation>
        <location evidence="1">Nucleus</location>
    </subcellularLocation>
</comment>
<comment type="similarity">
    <text evidence="3">Belongs to the DNA mismatch repair MutL/HexB family.</text>
</comment>
<comment type="sequence caution" evidence="3">
    <conflict type="frameshift">
        <sequence resource="EMBL-CDS" id="AAA87031"/>
    </conflict>
</comment>
<proteinExistence type="evidence at transcript level"/>
<sequence length="859" mass="95298">MEQTEGVSTECAKAIKPIDGKSVHQICSGQVVLSLSTAVKELIENSVDAGATTIDLRLKDYGVDLIEVSDNGCGVEEENFEGLALKHHTSKIQEFADLTQVETFGFRGEALSSLCALSDVTISTCHGSASVGTRLVFDHNGKITQKTPYPRPKGTTVSVQHLFYTLPVRYKEFQRNIKKEYAKMVQVLQAYCIISAGVRVSCTNQLGQGKRQPVVCTSGSSGMKENIGSVFGQKQLQSLIPFVQLPPSDAVCEEYGLSTSRTPQNLFYVSGFISQCTHGAGRSATDRQFFFINQRPCDPAKVSKLVNEVYHMYNRHQYPFVVLNVSVDSECVDINVTPDKRQILLQEEKLLLAVLKTSLIGMFDSDANKLNVNQQPLLDVEGNLVKLHTAELEKPVPGKQDNSPSLKSTADEKRVASISRLREAFSLHPTKEIKSRGPETAELTRSFPSEKRGVLSSYPSDVISYRGLRGSQDKLVSPTDSPGDCMDREKIEKDSGLSSTSAGSEEGFSTPEVASSFSSDYNVSSPEDRPSQETINCGDLDCRPPGTGQSLKPEDHGYQCKALPLARLSPTNAKRFKTEERPSNVNISQRLPGPQSTSAAEVDVAIKMNKRIVLLEFSLSSLAKRMKQLQHLKAQNKHELSYRKFRAKICPGENQAAEDELRKEISKSMFAEMEILGQFNLGFIVTKLKEDLFLVDQHAADEKYNFEMLQQHTVLQAQRLITPQTLNLTAVNEAVLIENLEIFRKNGFDFVIDEDAPVTERAKLISLPTSKNWTFGPQDIDELIFMLSDSPGVMCRPSRVRQMFASRACRKSVMIGTALNASEMKKLITHMGEMDHPWNCPHGRPTMRHVANLDVISQN</sequence>
<protein>
    <recommendedName>
        <fullName evidence="1">Mismatch repair endonuclease PMS2</fullName>
        <ecNumber>3.1.-.-</ecNumber>
    </recommendedName>
    <alternativeName>
        <fullName>DNA mismatch repair protein PMS2</fullName>
    </alternativeName>
    <alternativeName>
        <fullName evidence="1">PMS1 protein homolog 2</fullName>
    </alternativeName>
</protein>
<keyword id="KW-0067">ATP-binding</keyword>
<keyword id="KW-0227">DNA damage</keyword>
<keyword id="KW-0234">DNA repair</keyword>
<keyword id="KW-0255">Endonuclease</keyword>
<keyword id="KW-0378">Hydrolase</keyword>
<keyword id="KW-0540">Nuclease</keyword>
<keyword id="KW-0547">Nucleotide-binding</keyword>
<keyword id="KW-0539">Nucleus</keyword>
<keyword id="KW-1185">Reference proteome</keyword>
<keyword id="KW-0043">Tumor suppressor</keyword>
<evidence type="ECO:0000250" key="1">
    <source>
        <dbReference type="UniProtKB" id="P54278"/>
    </source>
</evidence>
<evidence type="ECO:0000256" key="2">
    <source>
        <dbReference type="SAM" id="MobiDB-lite"/>
    </source>
</evidence>
<evidence type="ECO:0000305" key="3"/>
<evidence type="ECO:0000312" key="4">
    <source>
        <dbReference type="MGI" id="MGI:104288"/>
    </source>
</evidence>
<gene>
    <name evidence="4" type="primary">Pms2</name>
</gene>
<feature type="chain" id="PRO_0000178006" description="Mismatch repair endonuclease PMS2">
    <location>
        <begin position="1"/>
        <end position="859"/>
    </location>
</feature>
<feature type="region of interest" description="Disordered" evidence="2">
    <location>
        <begin position="391"/>
        <end position="413"/>
    </location>
</feature>
<feature type="region of interest" description="Disordered" evidence="2">
    <location>
        <begin position="427"/>
        <end position="455"/>
    </location>
</feature>
<feature type="region of interest" description="Disordered" evidence="2">
    <location>
        <begin position="469"/>
        <end position="555"/>
    </location>
</feature>
<feature type="region of interest" description="Disordered" evidence="2">
    <location>
        <begin position="578"/>
        <end position="597"/>
    </location>
</feature>
<feature type="short sequence motif" description="Nuclear localization signal" evidence="1">
    <location>
        <begin position="574"/>
        <end position="577"/>
    </location>
</feature>
<feature type="compositionally biased region" description="Basic and acidic residues" evidence="2">
    <location>
        <begin position="427"/>
        <end position="439"/>
    </location>
</feature>
<feature type="compositionally biased region" description="Basic and acidic residues" evidence="2">
    <location>
        <begin position="485"/>
        <end position="495"/>
    </location>
</feature>
<feature type="compositionally biased region" description="Polar residues" evidence="2">
    <location>
        <begin position="512"/>
        <end position="525"/>
    </location>
</feature>
<feature type="compositionally biased region" description="Polar residues" evidence="2">
    <location>
        <begin position="583"/>
        <end position="597"/>
    </location>
</feature>
<feature type="binding site" evidence="1">
    <location>
        <position position="45"/>
    </location>
    <ligand>
        <name>ATP</name>
        <dbReference type="ChEBI" id="CHEBI:30616"/>
    </ligand>
</feature>
<feature type="binding site" evidence="1">
    <location>
        <position position="70"/>
    </location>
    <ligand>
        <name>ATP</name>
        <dbReference type="ChEBI" id="CHEBI:30616"/>
    </ligand>
</feature>
<feature type="binding site" evidence="1">
    <location>
        <position position="109"/>
    </location>
    <ligand>
        <name>ATP</name>
        <dbReference type="ChEBI" id="CHEBI:30616"/>
    </ligand>
</feature>
<feature type="binding site" evidence="1">
    <location>
        <position position="110"/>
    </location>
    <ligand>
        <name>ATP</name>
        <dbReference type="ChEBI" id="CHEBI:30616"/>
    </ligand>
</feature>
<feature type="binding site" evidence="1">
    <location>
        <position position="111"/>
    </location>
    <ligand>
        <name>ATP</name>
        <dbReference type="ChEBI" id="CHEBI:30616"/>
    </ligand>
</feature>
<feature type="sequence conflict" description="In Ref. 1; AAA87031." evidence="3" ref="1">
    <original>V</original>
    <variation>I</variation>
    <location>
        <position position="32"/>
    </location>
</feature>
<feature type="sequence conflict" description="In Ref. 1; AAA87031." evidence="3" ref="1">
    <original>A</original>
    <variation>S</variation>
    <location>
        <position position="182"/>
    </location>
</feature>
<feature type="sequence conflict" description="In Ref. 1; AAA87031." evidence="3" ref="1">
    <original>QP</original>
    <variation>HA</variation>
    <location>
        <begin position="212"/>
        <end position="213"/>
    </location>
</feature>
<feature type="sequence conflict" description="In Ref. 1; AAA87031." evidence="3" ref="1">
    <original>S</original>
    <variation>T</variation>
    <location>
        <position position="220"/>
    </location>
</feature>
<feature type="sequence conflict" description="In Ref. 1; AAA87031." evidence="3" ref="1">
    <original>G</original>
    <variation>E</variation>
    <location>
        <position position="507"/>
    </location>
</feature>
<feature type="sequence conflict" description="In Ref. 1; AAA87031." evidence="3" ref="1">
    <original>P</original>
    <variation>L</variation>
    <location>
        <position position="526"/>
    </location>
</feature>
<reference key="1">
    <citation type="journal article" date="1995" name="Cell">
        <title>Male mice defective in the DNA mismatch repair gene PMS2 exhibit abnormal chromosome synapsis in meiosis.</title>
        <authorList>
            <person name="Baker S.M."/>
            <person name="Bronner C.E."/>
            <person name="Zhang L."/>
            <person name="Plug A."/>
            <person name="Robatzek M."/>
            <person name="Warren G."/>
            <person name="Elliot E.A."/>
            <person name="Yu J."/>
            <person name="Ashley T."/>
            <person name="Arnheim N."/>
            <person name="Flavell R.A."/>
            <person name="Liskay R.M."/>
        </authorList>
    </citation>
    <scope>NUCLEOTIDE SEQUENCE [MRNA]</scope>
</reference>
<reference key="2">
    <citation type="journal article" date="2009" name="PLoS Biol.">
        <title>Lineage-specific biology revealed by a finished genome assembly of the mouse.</title>
        <authorList>
            <person name="Church D.M."/>
            <person name="Goodstadt L."/>
            <person name="Hillier L.W."/>
            <person name="Zody M.C."/>
            <person name="Goldstein S."/>
            <person name="She X."/>
            <person name="Bult C.J."/>
            <person name="Agarwala R."/>
            <person name="Cherry J.L."/>
            <person name="DiCuccio M."/>
            <person name="Hlavina W."/>
            <person name="Kapustin Y."/>
            <person name="Meric P."/>
            <person name="Maglott D."/>
            <person name="Birtle Z."/>
            <person name="Marques A.C."/>
            <person name="Graves T."/>
            <person name="Zhou S."/>
            <person name="Teague B."/>
            <person name="Potamousis K."/>
            <person name="Churas C."/>
            <person name="Place M."/>
            <person name="Herschleb J."/>
            <person name="Runnheim R."/>
            <person name="Forrest D."/>
            <person name="Amos-Landgraf J."/>
            <person name="Schwartz D.C."/>
            <person name="Cheng Z."/>
            <person name="Lindblad-Toh K."/>
            <person name="Eichler E.E."/>
            <person name="Ponting C.P."/>
        </authorList>
    </citation>
    <scope>NUCLEOTIDE SEQUENCE [LARGE SCALE GENOMIC DNA]</scope>
    <source>
        <strain>C57BL/6J</strain>
    </source>
</reference>
<reference key="3">
    <citation type="journal article" date="2004" name="Genome Res.">
        <title>The status, quality, and expansion of the NIH full-length cDNA project: the Mammalian Gene Collection (MGC).</title>
        <authorList>
            <consortium name="The MGC Project Team"/>
        </authorList>
    </citation>
    <scope>NUCLEOTIDE SEQUENCE [LARGE SCALE MRNA]</scope>
    <source>
        <tissue>Brain</tissue>
    </source>
</reference>